<keyword id="KW-0067">ATP-binding</keyword>
<keyword id="KW-0173">Coenzyme A biosynthesis</keyword>
<keyword id="KW-0963">Cytoplasm</keyword>
<keyword id="KW-0418">Kinase</keyword>
<keyword id="KW-0547">Nucleotide-binding</keyword>
<keyword id="KW-0808">Transferase</keyword>
<feature type="chain" id="PRO_0000194436" description="Pantothenate kinase">
    <location>
        <begin position="1"/>
        <end position="306"/>
    </location>
</feature>
<feature type="binding site" evidence="1">
    <location>
        <begin position="90"/>
        <end position="97"/>
    </location>
    <ligand>
        <name>ATP</name>
        <dbReference type="ChEBI" id="CHEBI:30616"/>
    </ligand>
</feature>
<gene>
    <name evidence="1" type="primary">coaA</name>
    <name type="ordered locus">LMOf2365_0944</name>
</gene>
<proteinExistence type="inferred from homology"/>
<comment type="catalytic activity">
    <reaction evidence="1">
        <text>(R)-pantothenate + ATP = (R)-4'-phosphopantothenate + ADP + H(+)</text>
        <dbReference type="Rhea" id="RHEA:16373"/>
        <dbReference type="ChEBI" id="CHEBI:10986"/>
        <dbReference type="ChEBI" id="CHEBI:15378"/>
        <dbReference type="ChEBI" id="CHEBI:29032"/>
        <dbReference type="ChEBI" id="CHEBI:30616"/>
        <dbReference type="ChEBI" id="CHEBI:456216"/>
        <dbReference type="EC" id="2.7.1.33"/>
    </reaction>
</comment>
<comment type="pathway">
    <text evidence="1">Cofactor biosynthesis; coenzyme A biosynthesis; CoA from (R)-pantothenate: step 1/5.</text>
</comment>
<comment type="subcellular location">
    <subcellularLocation>
        <location evidence="1">Cytoplasm</location>
    </subcellularLocation>
</comment>
<comment type="similarity">
    <text evidence="1">Belongs to the prokaryotic pantothenate kinase family.</text>
</comment>
<protein>
    <recommendedName>
        <fullName evidence="1">Pantothenate kinase</fullName>
        <ecNumber evidence="1">2.7.1.33</ecNumber>
    </recommendedName>
    <alternativeName>
        <fullName evidence="1">Pantothenic acid kinase</fullName>
    </alternativeName>
</protein>
<name>COAA_LISMF</name>
<evidence type="ECO:0000255" key="1">
    <source>
        <dbReference type="HAMAP-Rule" id="MF_00215"/>
    </source>
</evidence>
<organism>
    <name type="scientific">Listeria monocytogenes serotype 4b (strain F2365)</name>
    <dbReference type="NCBI Taxonomy" id="265669"/>
    <lineage>
        <taxon>Bacteria</taxon>
        <taxon>Bacillati</taxon>
        <taxon>Bacillota</taxon>
        <taxon>Bacilli</taxon>
        <taxon>Bacillales</taxon>
        <taxon>Listeriaceae</taxon>
        <taxon>Listeria</taxon>
    </lineage>
</organism>
<accession>Q721P1</accession>
<sequence length="306" mass="36110">MNDYNHYFHFPREEWRKLEVSKDQILTAEELEEIRGLNDRISLQDISEIYLPLIKLIAIQYHEAIFIHGEKMEYLKKKESRAPFIIALAGSVAVGKSTTARVFKLMLDRWFSKTRQVELVTTDGFLYPNKVLEERGIMDKKGFPESYDRDRFAKFLTDLKANKEDVEIPLYSHFTYDVLDETRVIHNPDIVIIEGINVLQADQHESLFPSDFFDFSVYMDANEADIKKWYLERFFMLRETAFQDESSYFHPYTKISKQEAETFALGVWDTINGVNLKENIEKTKYRADLVLQKGTDHLISDIYLRK</sequence>
<dbReference type="EC" id="2.7.1.33" evidence="1"/>
<dbReference type="EMBL" id="AE017262">
    <property type="protein sequence ID" value="AAT03723.1"/>
    <property type="molecule type" value="Genomic_DNA"/>
</dbReference>
<dbReference type="RefSeq" id="WP_003721490.1">
    <property type="nucleotide sequence ID" value="NC_002973.6"/>
</dbReference>
<dbReference type="SMR" id="Q721P1"/>
<dbReference type="KEGG" id="lmf:LMOf2365_0944"/>
<dbReference type="HOGENOM" id="CLU_053818_1_1_9"/>
<dbReference type="UniPathway" id="UPA00241">
    <property type="reaction ID" value="UER00352"/>
</dbReference>
<dbReference type="GO" id="GO:0005737">
    <property type="term" value="C:cytoplasm"/>
    <property type="evidence" value="ECO:0007669"/>
    <property type="project" value="UniProtKB-SubCell"/>
</dbReference>
<dbReference type="GO" id="GO:0005524">
    <property type="term" value="F:ATP binding"/>
    <property type="evidence" value="ECO:0007669"/>
    <property type="project" value="UniProtKB-UniRule"/>
</dbReference>
<dbReference type="GO" id="GO:0004594">
    <property type="term" value="F:pantothenate kinase activity"/>
    <property type="evidence" value="ECO:0007669"/>
    <property type="project" value="UniProtKB-UniRule"/>
</dbReference>
<dbReference type="GO" id="GO:0015937">
    <property type="term" value="P:coenzyme A biosynthetic process"/>
    <property type="evidence" value="ECO:0007669"/>
    <property type="project" value="UniProtKB-UniRule"/>
</dbReference>
<dbReference type="CDD" id="cd02025">
    <property type="entry name" value="PanK"/>
    <property type="match status" value="1"/>
</dbReference>
<dbReference type="FunFam" id="3.40.50.300:FF:001878">
    <property type="entry name" value="Pantothenate kinase"/>
    <property type="match status" value="1"/>
</dbReference>
<dbReference type="Gene3D" id="3.40.50.300">
    <property type="entry name" value="P-loop containing nucleotide triphosphate hydrolases"/>
    <property type="match status" value="1"/>
</dbReference>
<dbReference type="HAMAP" id="MF_00215">
    <property type="entry name" value="Pantothen_kinase_1"/>
    <property type="match status" value="1"/>
</dbReference>
<dbReference type="InterPro" id="IPR027417">
    <property type="entry name" value="P-loop_NTPase"/>
</dbReference>
<dbReference type="InterPro" id="IPR004566">
    <property type="entry name" value="PanK"/>
</dbReference>
<dbReference type="InterPro" id="IPR006083">
    <property type="entry name" value="PRK/URK"/>
</dbReference>
<dbReference type="NCBIfam" id="TIGR00554">
    <property type="entry name" value="panK_bact"/>
    <property type="match status" value="1"/>
</dbReference>
<dbReference type="PANTHER" id="PTHR10285">
    <property type="entry name" value="URIDINE KINASE"/>
    <property type="match status" value="1"/>
</dbReference>
<dbReference type="Pfam" id="PF00485">
    <property type="entry name" value="PRK"/>
    <property type="match status" value="1"/>
</dbReference>
<dbReference type="PIRSF" id="PIRSF000545">
    <property type="entry name" value="Pantothenate_kin"/>
    <property type="match status" value="1"/>
</dbReference>
<dbReference type="SUPFAM" id="SSF52540">
    <property type="entry name" value="P-loop containing nucleoside triphosphate hydrolases"/>
    <property type="match status" value="1"/>
</dbReference>
<reference key="1">
    <citation type="journal article" date="2004" name="Nucleic Acids Res.">
        <title>Whole genome comparisons of serotype 4b and 1/2a strains of the food-borne pathogen Listeria monocytogenes reveal new insights into the core genome components of this species.</title>
        <authorList>
            <person name="Nelson K.E."/>
            <person name="Fouts D.E."/>
            <person name="Mongodin E.F."/>
            <person name="Ravel J."/>
            <person name="DeBoy R.T."/>
            <person name="Kolonay J.F."/>
            <person name="Rasko D.A."/>
            <person name="Angiuoli S.V."/>
            <person name="Gill S.R."/>
            <person name="Paulsen I.T."/>
            <person name="Peterson J.D."/>
            <person name="White O."/>
            <person name="Nelson W.C."/>
            <person name="Nierman W.C."/>
            <person name="Beanan M.J."/>
            <person name="Brinkac L.M."/>
            <person name="Daugherty S.C."/>
            <person name="Dodson R.J."/>
            <person name="Durkin A.S."/>
            <person name="Madupu R."/>
            <person name="Haft D.H."/>
            <person name="Selengut J."/>
            <person name="Van Aken S.E."/>
            <person name="Khouri H.M."/>
            <person name="Fedorova N."/>
            <person name="Forberger H.A."/>
            <person name="Tran B."/>
            <person name="Kathariou S."/>
            <person name="Wonderling L.D."/>
            <person name="Uhlich G.A."/>
            <person name="Bayles D.O."/>
            <person name="Luchansky J.B."/>
            <person name="Fraser C.M."/>
        </authorList>
    </citation>
    <scope>NUCLEOTIDE SEQUENCE [LARGE SCALE GENOMIC DNA]</scope>
    <source>
        <strain>F2365</strain>
    </source>
</reference>